<sequence length="447" mass="49548">MPDRAQVIIRIVPGGGTKTLQQIINQLEYLSRKGRLELQRSARHLDIPLPPDQIHELARSWVQETGTYDESQPDEERQQELTTHIIVSFPAGTSQVAAYAASREWAAEMFGSGAGGGRYNYLTAFHIDRDHPHLHVVVNRRELLGHGWLKISRRHPQLNYDALRIKMAEISLRHGIALDASRRAERGITERPITYAQYRRLEREQARQIRFEDADLEQSSPQGDHPEFSQPFDTSPFEASAGGPEDMPRPNNRQNESQVHLQEPAGVSNEAGVLVRVALETERLAQPFVSETILADDIGSGSSRVAEGRVESANRTPDIPRAATEAATHTTHDRQRRAKRPHDDDGGPSGAKRVTLEGIAVGPQANAGEQDGSSGPLVRQAGTSRPSPPTATTRASTATDSLSATAHLQQRRGVLSKRPREDDDGEPSERKRERDERSKDGRGGNRR</sequence>
<keyword id="KW-0002">3D-structure</keyword>
<keyword id="KW-0192">Crown gall tumor</keyword>
<keyword id="KW-0255">Endonuclease</keyword>
<keyword id="KW-0378">Hydrolase</keyword>
<keyword id="KW-0540">Nuclease</keyword>
<keyword id="KW-0614">Plasmid</keyword>
<keyword id="KW-1185">Reference proteome</keyword>
<dbReference type="EC" id="3.1.-.-"/>
<dbReference type="EMBL" id="M11311">
    <property type="protein sequence ID" value="AAA98366.1"/>
    <property type="status" value="ALT_SEQ"/>
    <property type="molecule type" value="Genomic_DNA"/>
</dbReference>
<dbReference type="EMBL" id="J03320">
    <property type="protein sequence ID" value="AAA91604.1"/>
    <property type="molecule type" value="Genomic_DNA"/>
</dbReference>
<dbReference type="EMBL" id="AE007871">
    <property type="protein sequence ID" value="AAK90944.1"/>
    <property type="molecule type" value="Genomic_DNA"/>
</dbReference>
<dbReference type="PIR" id="AD3250">
    <property type="entry name" value="AD3250"/>
</dbReference>
<dbReference type="PIR" id="B22666">
    <property type="entry name" value="B22666"/>
</dbReference>
<dbReference type="PIR" id="S11839">
    <property type="entry name" value="S11839"/>
</dbReference>
<dbReference type="RefSeq" id="NP_396503.1">
    <property type="nucleotide sequence ID" value="NC_003065.3"/>
</dbReference>
<dbReference type="RefSeq" id="WP_010974919.1">
    <property type="nucleotide sequence ID" value="NC_003065.3"/>
</dbReference>
<dbReference type="PDB" id="4BQK">
    <property type="method" value="X-ray"/>
    <property type="resolution" value="2.00 A"/>
    <property type="chains" value="C/D=415-434"/>
</dbReference>
<dbReference type="PDBsum" id="4BQK"/>
<dbReference type="SMR" id="P18592"/>
<dbReference type="IntAct" id="P18592">
    <property type="interactions" value="2"/>
</dbReference>
<dbReference type="MINT" id="P18592"/>
<dbReference type="EnsemblBacteria" id="AAK90944">
    <property type="protein sequence ID" value="AAK90944"/>
    <property type="gene ID" value="Atu6182"/>
</dbReference>
<dbReference type="GeneID" id="1137505"/>
<dbReference type="KEGG" id="atu:Atu6182"/>
<dbReference type="PATRIC" id="fig|176299.10.peg.5376"/>
<dbReference type="HOGENOM" id="CLU_663697_0_0_5"/>
<dbReference type="OrthoDB" id="98563at2"/>
<dbReference type="BioCyc" id="AGRO:ATU6182-MONOMER"/>
<dbReference type="EvolutionaryTrace" id="P18592"/>
<dbReference type="Proteomes" id="UP000000813">
    <property type="component" value="Plasmid Ti"/>
</dbReference>
<dbReference type="GO" id="GO:0003677">
    <property type="term" value="F:DNA binding"/>
    <property type="evidence" value="ECO:0000314"/>
    <property type="project" value="PAMGO_GAT"/>
</dbReference>
<dbReference type="GO" id="GO:0004520">
    <property type="term" value="F:DNA endonuclease activity"/>
    <property type="evidence" value="ECO:0007669"/>
    <property type="project" value="InterPro"/>
</dbReference>
<dbReference type="GO" id="GO:0051170">
    <property type="term" value="P:import into nucleus"/>
    <property type="evidence" value="ECO:0000314"/>
    <property type="project" value="PAMGO_GAT"/>
</dbReference>
<dbReference type="GO" id="GO:0051819">
    <property type="term" value="P:symbiont-mediated induction of tumor or growth in host"/>
    <property type="evidence" value="ECO:0007669"/>
    <property type="project" value="InterPro"/>
</dbReference>
<dbReference type="InterPro" id="IPR005094">
    <property type="entry name" value="Endonuclease_MobA/VirD2"/>
</dbReference>
<dbReference type="InterPro" id="IPR016644">
    <property type="entry name" value="VirD2"/>
</dbReference>
<dbReference type="NCBIfam" id="NF010437">
    <property type="entry name" value="PRK13863.1"/>
    <property type="match status" value="1"/>
</dbReference>
<dbReference type="Pfam" id="PF03432">
    <property type="entry name" value="Relaxase"/>
    <property type="match status" value="1"/>
</dbReference>
<dbReference type="PIRSF" id="PIRSF016095">
    <property type="entry name" value="Endonuclease_VirD2"/>
    <property type="match status" value="1"/>
</dbReference>
<gene>
    <name type="primary">virD2</name>
    <name type="ordered locus">Atu6182</name>
    <name type="ORF">AGR_pTi_21</name>
</gene>
<accession>P18592</accession>
<accession>P06521</accession>
<accession>P06522</accession>
<geneLocation type="plasmid">
    <name>pTiC58</name>
</geneLocation>
<name>VIRD2_AGRFC</name>
<protein>
    <recommendedName>
        <fullName>T-DNA border endonuclease VirD2</fullName>
        <ecNumber>3.1.-.-</ecNumber>
    </recommendedName>
</protein>
<reference key="1">
    <citation type="journal article" date="1985" name="Proc. Natl. Acad. Sci. U.S.A.">
        <title>Identification of pTiC58 plasmid-encoded proteins for virulence in Agrobacterium tumefaciens.</title>
        <authorList>
            <person name="Hagiya M."/>
            <person name="Close T.J."/>
            <person name="Tait R.C."/>
            <person name="Kado C.I."/>
        </authorList>
    </citation>
    <scope>PRELIMINARY NUCLEOTIDE SEQUENCE [GENOMIC DNA]</scope>
</reference>
<reference key="2">
    <citation type="journal article" date="1990" name="Plasmid">
        <title>Molecular characterization of the vir regulon of Agrobacterium tumefaciens: complete nucleotide sequence and gene organization of the 28.63-kbp regulon cloned as a single unit.</title>
        <authorList>
            <person name="Rogowsky P.M."/>
            <person name="Powell B.S."/>
            <person name="Shirasu K."/>
            <person name="Lin T.-S."/>
            <person name="Morel P."/>
            <person name="Zyprian E.M."/>
            <person name="Steck T.R."/>
            <person name="Kado C.I."/>
        </authorList>
    </citation>
    <scope>NUCLEOTIDE SEQUENCE [GENOMIC DNA]</scope>
</reference>
<reference key="3">
    <citation type="journal article" date="2001" name="Science">
        <title>The genome of the natural genetic engineer Agrobacterium tumefaciens C58.</title>
        <authorList>
            <person name="Wood D.W."/>
            <person name="Setubal J.C."/>
            <person name="Kaul R."/>
            <person name="Monks D.E."/>
            <person name="Kitajima J.P."/>
            <person name="Okura V.K."/>
            <person name="Zhou Y."/>
            <person name="Chen L."/>
            <person name="Wood G.E."/>
            <person name="Almeida N.F. Jr."/>
            <person name="Woo L."/>
            <person name="Chen Y."/>
            <person name="Paulsen I.T."/>
            <person name="Eisen J.A."/>
            <person name="Karp P.D."/>
            <person name="Bovee D. Sr."/>
            <person name="Chapman P."/>
            <person name="Clendenning J."/>
            <person name="Deatherage G."/>
            <person name="Gillet W."/>
            <person name="Grant C."/>
            <person name="Kutyavin T."/>
            <person name="Levy R."/>
            <person name="Li M.-J."/>
            <person name="McClelland E."/>
            <person name="Palmieri A."/>
            <person name="Raymond C."/>
            <person name="Rouse G."/>
            <person name="Saenphimmachak C."/>
            <person name="Wu Z."/>
            <person name="Romero P."/>
            <person name="Gordon D."/>
            <person name="Zhang S."/>
            <person name="Yoo H."/>
            <person name="Tao Y."/>
            <person name="Biddle P."/>
            <person name="Jung M."/>
            <person name="Krespan W."/>
            <person name="Perry M."/>
            <person name="Gordon-Kamm B."/>
            <person name="Liao L."/>
            <person name="Kim S."/>
            <person name="Hendrick C."/>
            <person name="Zhao Z.-Y."/>
            <person name="Dolan M."/>
            <person name="Chumley F."/>
            <person name="Tingey S.V."/>
            <person name="Tomb J.-F."/>
            <person name="Gordon M.P."/>
            <person name="Olson M.V."/>
            <person name="Nester E.W."/>
        </authorList>
    </citation>
    <scope>NUCLEOTIDE SEQUENCE [LARGE SCALE GENOMIC DNA]</scope>
</reference>
<reference key="4">
    <citation type="journal article" date="2001" name="Science">
        <title>Genome sequence of the plant pathogen and biotechnology agent Agrobacterium tumefaciens C58.</title>
        <authorList>
            <person name="Goodner B."/>
            <person name="Hinkle G."/>
            <person name="Gattung S."/>
            <person name="Miller N."/>
            <person name="Blanchard M."/>
            <person name="Qurollo B."/>
            <person name="Goldman B.S."/>
            <person name="Cao Y."/>
            <person name="Askenazi M."/>
            <person name="Halling C."/>
            <person name="Mullin L."/>
            <person name="Houmiel K."/>
            <person name="Gordon J."/>
            <person name="Vaudin M."/>
            <person name="Iartchouk O."/>
            <person name="Epp A."/>
            <person name="Liu F."/>
            <person name="Wollam C."/>
            <person name="Allinger M."/>
            <person name="Doughty D."/>
            <person name="Scott C."/>
            <person name="Lappas C."/>
            <person name="Markelz B."/>
            <person name="Flanagan C."/>
            <person name="Crowell C."/>
            <person name="Gurson J."/>
            <person name="Lomo C."/>
            <person name="Sear C."/>
            <person name="Strub G."/>
            <person name="Cielo C."/>
            <person name="Slater S."/>
        </authorList>
    </citation>
    <scope>NUCLEOTIDE SEQUENCE [LARGE SCALE GENOMIC DNA]</scope>
    <source>
        <strain>C58 / ATCC 33970</strain>
    </source>
</reference>
<feature type="chain" id="PRO_0000065859" description="T-DNA border endonuclease VirD2">
    <location>
        <begin position="1"/>
        <end position="447"/>
    </location>
</feature>
<feature type="region of interest" description="Disordered" evidence="1">
    <location>
        <begin position="214"/>
        <end position="265"/>
    </location>
</feature>
<feature type="region of interest" description="Disordered" evidence="1">
    <location>
        <begin position="300"/>
        <end position="447"/>
    </location>
</feature>
<feature type="compositionally biased region" description="Polar residues" evidence="1">
    <location>
        <begin position="251"/>
        <end position="260"/>
    </location>
</feature>
<feature type="compositionally biased region" description="Low complexity" evidence="1">
    <location>
        <begin position="390"/>
        <end position="406"/>
    </location>
</feature>
<feature type="compositionally biased region" description="Basic and acidic residues" evidence="1">
    <location>
        <begin position="427"/>
        <end position="447"/>
    </location>
</feature>
<feature type="sequence conflict" description="In Ref. 1 and 2." evidence="2" ref="1 2">
    <original>V</original>
    <variation>M</variation>
    <location>
        <position position="12"/>
    </location>
</feature>
<evidence type="ECO:0000256" key="1">
    <source>
        <dbReference type="SAM" id="MobiDB-lite"/>
    </source>
</evidence>
<evidence type="ECO:0000305" key="2"/>
<proteinExistence type="evidence at protein level"/>
<organism>
    <name type="scientific">Agrobacterium fabrum (strain C58 / ATCC 33970)</name>
    <name type="common">Agrobacterium tumefaciens (strain C58)</name>
    <dbReference type="NCBI Taxonomy" id="176299"/>
    <lineage>
        <taxon>Bacteria</taxon>
        <taxon>Pseudomonadati</taxon>
        <taxon>Pseudomonadota</taxon>
        <taxon>Alphaproteobacteria</taxon>
        <taxon>Hyphomicrobiales</taxon>
        <taxon>Rhizobiaceae</taxon>
        <taxon>Rhizobium/Agrobacterium group</taxon>
        <taxon>Agrobacterium</taxon>
        <taxon>Agrobacterium tumefaciens complex</taxon>
    </lineage>
</organism>
<comment type="function">
    <text>Tumor formation by A.tumefaciens involves the transfer and integration of a defined segment (T-DNA) of Ti plasmid DNA into the plant nuclear genome. The virD operon encodes a site-specific endonuclease that cleaves at a unique site within both 24 bp direct repeats flanking the T-DNA.</text>
</comment>
<comment type="interaction">
    <interactant intactId="EBI-7412635">
        <id>P18592</id>
    </interactant>
    <interactant intactId="EBI-7412683">
        <id>P07165</id>
        <label>virC1</label>
    </interactant>
    <organismsDiffer>false</organismsDiffer>
    <experiments>4</experiments>
</comment>